<dbReference type="EMBL" id="M30001">
    <property type="protein sequence ID" value="AAB07797.1"/>
    <property type="molecule type" value="Genomic_DNA"/>
</dbReference>
<dbReference type="EMBL" id="AF158101">
    <property type="protein sequence ID" value="AAD42606.1"/>
    <property type="molecule type" value="Genomic_DNA"/>
</dbReference>
<dbReference type="PIR" id="T10138">
    <property type="entry name" value="T10138"/>
</dbReference>
<dbReference type="RefSeq" id="NP_049640.1">
    <property type="nucleotide sequence ID" value="NC_000866.4"/>
</dbReference>
<dbReference type="SMR" id="P39427"/>
<dbReference type="GeneID" id="1258592"/>
<dbReference type="KEGG" id="vg:1258592"/>
<dbReference type="OrthoDB" id="22827at10239"/>
<dbReference type="Proteomes" id="UP000009087">
    <property type="component" value="Segment"/>
</dbReference>
<reference key="1">
    <citation type="journal article" date="1990" name="Gene">
        <title>The bacteriophage T4 gene mrh whose product inhibits late T4 gene expression in an Escherichia coli rpoH (sigma 32) mutant.</title>
        <authorList>
            <person name="Frazier M.W."/>
            <person name="Mosig G."/>
        </authorList>
    </citation>
    <scope>NUCLEOTIDE SEQUENCE [GENOMIC DNA]</scope>
</reference>
<reference key="2">
    <citation type="journal article" date="2003" name="Microbiol. Mol. Biol. Rev.">
        <title>Bacteriophage T4 genome.</title>
        <authorList>
            <person name="Miller E.S."/>
            <person name="Kutter E."/>
            <person name="Mosig G."/>
            <person name="Arisaka F."/>
            <person name="Kunisawa T."/>
            <person name="Ruger W."/>
        </authorList>
    </citation>
    <scope>NUCLEOTIDE SEQUENCE [LARGE SCALE GENOMIC DNA]</scope>
</reference>
<accession>P39427</accession>
<accession>Q9T0W0</accession>
<keyword id="KW-1185">Reference proteome</keyword>
<gene>
    <name type="primary">y01H</name>
    <name type="synonym">dda.9</name>
    <name type="synonym">modA.5</name>
    <name type="synonym">mrh.-1</name>
</gene>
<proteinExistence type="predicted"/>
<sequence>MKVLKKMLEWFNRPNSMYIDDGWVEQANKEMQNESEEWMKSMISAEKEKKLERSALKLMRDIYGDKS</sequence>
<organism>
    <name type="scientific">Enterobacteria phage T4</name>
    <name type="common">Bacteriophage T4</name>
    <dbReference type="NCBI Taxonomy" id="10665"/>
    <lineage>
        <taxon>Viruses</taxon>
        <taxon>Duplodnaviria</taxon>
        <taxon>Heunggongvirae</taxon>
        <taxon>Uroviricota</taxon>
        <taxon>Caudoviricetes</taxon>
        <taxon>Straboviridae</taxon>
        <taxon>Tevenvirinae</taxon>
        <taxon>Tequatrovirus</taxon>
    </lineage>
</organism>
<protein>
    <recommendedName>
        <fullName>Uncharacterized 8.1 kDa protein in modB-mrh intergenic region</fullName>
    </recommendedName>
</protein>
<name>Y01H_BPT4</name>
<feature type="chain" id="PRO_0000165089" description="Uncharacterized 8.1 kDa protein in modB-mrh intergenic region">
    <location>
        <begin position="1"/>
        <end position="67"/>
    </location>
</feature>
<organismHost>
    <name type="scientific">Escherichia coli</name>
    <dbReference type="NCBI Taxonomy" id="562"/>
</organismHost>